<gene>
    <name evidence="1" type="primary">ruvB</name>
    <name type="ordered locus">BL0729</name>
</gene>
<comment type="function">
    <text evidence="1">The RuvA-RuvB-RuvC complex processes Holliday junction (HJ) DNA during genetic recombination and DNA repair, while the RuvA-RuvB complex plays an important role in the rescue of blocked DNA replication forks via replication fork reversal (RFR). RuvA specifically binds to HJ cruciform DNA, conferring on it an open structure. The RuvB hexamer acts as an ATP-dependent pump, pulling dsDNA into and through the RuvAB complex. RuvB forms 2 homohexamers on either side of HJ DNA bound by 1 or 2 RuvA tetramers; 4 subunits per hexamer contact DNA at a time. Coordinated motions by a converter formed by DNA-disengaged RuvB subunits stimulates ATP hydrolysis and nucleotide exchange. Immobilization of the converter enables RuvB to convert the ATP-contained energy into a lever motion, pulling 2 nucleotides of DNA out of the RuvA tetramer per ATP hydrolyzed, thus driving DNA branch migration. The RuvB motors rotate together with the DNA substrate, which together with the progressing nucleotide cycle form the mechanistic basis for DNA recombination by continuous HJ branch migration. Branch migration allows RuvC to scan DNA until it finds its consensus sequence, where it cleaves and resolves cruciform DNA.</text>
</comment>
<comment type="catalytic activity">
    <reaction evidence="1">
        <text>ATP + H2O = ADP + phosphate + H(+)</text>
        <dbReference type="Rhea" id="RHEA:13065"/>
        <dbReference type="ChEBI" id="CHEBI:15377"/>
        <dbReference type="ChEBI" id="CHEBI:15378"/>
        <dbReference type="ChEBI" id="CHEBI:30616"/>
        <dbReference type="ChEBI" id="CHEBI:43474"/>
        <dbReference type="ChEBI" id="CHEBI:456216"/>
    </reaction>
</comment>
<comment type="subunit">
    <text evidence="1">Homohexamer. Forms an RuvA(8)-RuvB(12)-Holliday junction (HJ) complex. HJ DNA is sandwiched between 2 RuvA tetramers; dsDNA enters through RuvA and exits via RuvB. An RuvB hexamer assembles on each DNA strand where it exits the tetramer. Each RuvB hexamer is contacted by two RuvA subunits (via domain III) on 2 adjacent RuvB subunits; this complex drives branch migration. In the full resolvosome a probable DNA-RuvA(4)-RuvB(12)-RuvC(2) complex forms which resolves the HJ.</text>
</comment>
<comment type="subcellular location">
    <subcellularLocation>
        <location evidence="1">Cytoplasm</location>
    </subcellularLocation>
</comment>
<comment type="domain">
    <text evidence="1">Has 3 domains, the large (RuvB-L) and small ATPase (RuvB-S) domains and the C-terminal head (RuvB-H) domain. The head domain binds DNA, while the ATPase domains jointly bind ATP, ADP or are empty depending on the state of the subunit in the translocation cycle. During a single DNA translocation step the structure of each domain remains the same, but their relative positions change.</text>
</comment>
<comment type="similarity">
    <text evidence="1">Belongs to the RuvB family.</text>
</comment>
<organism>
    <name type="scientific">Bifidobacterium longum (strain NCC 2705)</name>
    <dbReference type="NCBI Taxonomy" id="206672"/>
    <lineage>
        <taxon>Bacteria</taxon>
        <taxon>Bacillati</taxon>
        <taxon>Actinomycetota</taxon>
        <taxon>Actinomycetes</taxon>
        <taxon>Bifidobacteriales</taxon>
        <taxon>Bifidobacteriaceae</taxon>
        <taxon>Bifidobacterium</taxon>
    </lineage>
</organism>
<dbReference type="EC" id="3.6.4.-" evidence="1"/>
<dbReference type="EMBL" id="AE014295">
    <property type="protein sequence ID" value="AAN24546.1"/>
    <property type="molecule type" value="Genomic_DNA"/>
</dbReference>
<dbReference type="RefSeq" id="NP_695910.1">
    <property type="nucleotide sequence ID" value="NC_004307.2"/>
</dbReference>
<dbReference type="RefSeq" id="WP_007054282.1">
    <property type="nucleotide sequence ID" value="NC_004307.2"/>
</dbReference>
<dbReference type="SMR" id="Q8G6B7"/>
<dbReference type="STRING" id="206672.BL0729"/>
<dbReference type="EnsemblBacteria" id="AAN24546">
    <property type="protein sequence ID" value="AAN24546"/>
    <property type="gene ID" value="BL0729"/>
</dbReference>
<dbReference type="KEGG" id="blo:BL0729"/>
<dbReference type="PATRIC" id="fig|206672.9.peg.426"/>
<dbReference type="HOGENOM" id="CLU_055599_1_0_11"/>
<dbReference type="OrthoDB" id="9804478at2"/>
<dbReference type="PhylomeDB" id="Q8G6B7"/>
<dbReference type="Proteomes" id="UP000000439">
    <property type="component" value="Chromosome"/>
</dbReference>
<dbReference type="GO" id="GO:0005737">
    <property type="term" value="C:cytoplasm"/>
    <property type="evidence" value="ECO:0007669"/>
    <property type="project" value="UniProtKB-SubCell"/>
</dbReference>
<dbReference type="GO" id="GO:0048476">
    <property type="term" value="C:Holliday junction resolvase complex"/>
    <property type="evidence" value="ECO:0007669"/>
    <property type="project" value="UniProtKB-UniRule"/>
</dbReference>
<dbReference type="GO" id="GO:0005524">
    <property type="term" value="F:ATP binding"/>
    <property type="evidence" value="ECO:0007669"/>
    <property type="project" value="UniProtKB-UniRule"/>
</dbReference>
<dbReference type="GO" id="GO:0016887">
    <property type="term" value="F:ATP hydrolysis activity"/>
    <property type="evidence" value="ECO:0007669"/>
    <property type="project" value="InterPro"/>
</dbReference>
<dbReference type="GO" id="GO:0000400">
    <property type="term" value="F:four-way junction DNA binding"/>
    <property type="evidence" value="ECO:0007669"/>
    <property type="project" value="UniProtKB-UniRule"/>
</dbReference>
<dbReference type="GO" id="GO:0009378">
    <property type="term" value="F:four-way junction helicase activity"/>
    <property type="evidence" value="ECO:0007669"/>
    <property type="project" value="InterPro"/>
</dbReference>
<dbReference type="GO" id="GO:0006310">
    <property type="term" value="P:DNA recombination"/>
    <property type="evidence" value="ECO:0007669"/>
    <property type="project" value="UniProtKB-UniRule"/>
</dbReference>
<dbReference type="GO" id="GO:0006281">
    <property type="term" value="P:DNA repair"/>
    <property type="evidence" value="ECO:0007669"/>
    <property type="project" value="UniProtKB-UniRule"/>
</dbReference>
<dbReference type="CDD" id="cd00009">
    <property type="entry name" value="AAA"/>
    <property type="match status" value="1"/>
</dbReference>
<dbReference type="Gene3D" id="1.10.8.60">
    <property type="match status" value="1"/>
</dbReference>
<dbReference type="Gene3D" id="3.40.50.300">
    <property type="entry name" value="P-loop containing nucleotide triphosphate hydrolases"/>
    <property type="match status" value="1"/>
</dbReference>
<dbReference type="Gene3D" id="1.10.10.10">
    <property type="entry name" value="Winged helix-like DNA-binding domain superfamily/Winged helix DNA-binding domain"/>
    <property type="match status" value="1"/>
</dbReference>
<dbReference type="HAMAP" id="MF_00016">
    <property type="entry name" value="DNA_HJ_migration_RuvB"/>
    <property type="match status" value="1"/>
</dbReference>
<dbReference type="InterPro" id="IPR003593">
    <property type="entry name" value="AAA+_ATPase"/>
</dbReference>
<dbReference type="InterPro" id="IPR041445">
    <property type="entry name" value="AAA_lid_4"/>
</dbReference>
<dbReference type="InterPro" id="IPR004605">
    <property type="entry name" value="DNA_helicase_Holl-junc_RuvB"/>
</dbReference>
<dbReference type="InterPro" id="IPR027417">
    <property type="entry name" value="P-loop_NTPase"/>
</dbReference>
<dbReference type="InterPro" id="IPR008824">
    <property type="entry name" value="RuvB-like_N"/>
</dbReference>
<dbReference type="InterPro" id="IPR008823">
    <property type="entry name" value="RuvB_C"/>
</dbReference>
<dbReference type="InterPro" id="IPR036388">
    <property type="entry name" value="WH-like_DNA-bd_sf"/>
</dbReference>
<dbReference type="InterPro" id="IPR036390">
    <property type="entry name" value="WH_DNA-bd_sf"/>
</dbReference>
<dbReference type="NCBIfam" id="NF000868">
    <property type="entry name" value="PRK00080.1"/>
    <property type="match status" value="1"/>
</dbReference>
<dbReference type="NCBIfam" id="TIGR00635">
    <property type="entry name" value="ruvB"/>
    <property type="match status" value="1"/>
</dbReference>
<dbReference type="PANTHER" id="PTHR42848">
    <property type="match status" value="1"/>
</dbReference>
<dbReference type="PANTHER" id="PTHR42848:SF1">
    <property type="entry name" value="HOLLIDAY JUNCTION BRANCH MIGRATION COMPLEX SUBUNIT RUVB"/>
    <property type="match status" value="1"/>
</dbReference>
<dbReference type="Pfam" id="PF17864">
    <property type="entry name" value="AAA_lid_4"/>
    <property type="match status" value="1"/>
</dbReference>
<dbReference type="Pfam" id="PF05491">
    <property type="entry name" value="RuvB_C"/>
    <property type="match status" value="1"/>
</dbReference>
<dbReference type="Pfam" id="PF05496">
    <property type="entry name" value="RuvB_N"/>
    <property type="match status" value="1"/>
</dbReference>
<dbReference type="SMART" id="SM00382">
    <property type="entry name" value="AAA"/>
    <property type="match status" value="1"/>
</dbReference>
<dbReference type="SUPFAM" id="SSF52540">
    <property type="entry name" value="P-loop containing nucleoside triphosphate hydrolases"/>
    <property type="match status" value="1"/>
</dbReference>
<dbReference type="SUPFAM" id="SSF46785">
    <property type="entry name" value="Winged helix' DNA-binding domain"/>
    <property type="match status" value="1"/>
</dbReference>
<proteinExistence type="inferred from homology"/>
<protein>
    <recommendedName>
        <fullName evidence="1">Holliday junction branch migration complex subunit RuvB</fullName>
        <ecNumber evidence="1">3.6.4.-</ecNumber>
    </recommendedName>
</protein>
<reference key="1">
    <citation type="journal article" date="2002" name="Proc. Natl. Acad. Sci. U.S.A.">
        <title>The genome sequence of Bifidobacterium longum reflects its adaptation to the human gastrointestinal tract.</title>
        <authorList>
            <person name="Schell M.A."/>
            <person name="Karmirantzou M."/>
            <person name="Snel B."/>
            <person name="Vilanova D."/>
            <person name="Berger B."/>
            <person name="Pessi G."/>
            <person name="Zwahlen M.-C."/>
            <person name="Desiere F."/>
            <person name="Bork P."/>
            <person name="Delley M."/>
            <person name="Pridmore R.D."/>
            <person name="Arigoni F."/>
        </authorList>
    </citation>
    <scope>NUCLEOTIDE SEQUENCE [LARGE SCALE GENOMIC DNA]</scope>
    <source>
        <strain>NCC 2705</strain>
    </source>
</reference>
<name>RUVB_BIFLO</name>
<accession>Q8G6B7</accession>
<keyword id="KW-0067">ATP-binding</keyword>
<keyword id="KW-0963">Cytoplasm</keyword>
<keyword id="KW-0227">DNA damage</keyword>
<keyword id="KW-0233">DNA recombination</keyword>
<keyword id="KW-0234">DNA repair</keyword>
<keyword id="KW-0238">DNA-binding</keyword>
<keyword id="KW-0378">Hydrolase</keyword>
<keyword id="KW-0547">Nucleotide-binding</keyword>
<keyword id="KW-1185">Reference proteome</keyword>
<feature type="chain" id="PRO_0000165498" description="Holliday junction branch migration complex subunit RuvB">
    <location>
        <begin position="1"/>
        <end position="354"/>
    </location>
</feature>
<feature type="region of interest" description="Large ATPase domain (RuvB-L)" evidence="1">
    <location>
        <begin position="4"/>
        <end position="198"/>
    </location>
</feature>
<feature type="region of interest" description="Small ATPAse domain (RuvB-S)" evidence="1">
    <location>
        <begin position="199"/>
        <end position="269"/>
    </location>
</feature>
<feature type="region of interest" description="Head domain (RuvB-H)" evidence="1">
    <location>
        <begin position="272"/>
        <end position="354"/>
    </location>
</feature>
<feature type="binding site" evidence="1">
    <location>
        <position position="37"/>
    </location>
    <ligand>
        <name>ATP</name>
        <dbReference type="ChEBI" id="CHEBI:30616"/>
    </ligand>
</feature>
<feature type="binding site" evidence="1">
    <location>
        <position position="38"/>
    </location>
    <ligand>
        <name>ATP</name>
        <dbReference type="ChEBI" id="CHEBI:30616"/>
    </ligand>
</feature>
<feature type="binding site" evidence="1">
    <location>
        <position position="79"/>
    </location>
    <ligand>
        <name>ATP</name>
        <dbReference type="ChEBI" id="CHEBI:30616"/>
    </ligand>
</feature>
<feature type="binding site" evidence="1">
    <location>
        <position position="82"/>
    </location>
    <ligand>
        <name>ATP</name>
        <dbReference type="ChEBI" id="CHEBI:30616"/>
    </ligand>
</feature>
<feature type="binding site" evidence="1">
    <location>
        <position position="83"/>
    </location>
    <ligand>
        <name>ATP</name>
        <dbReference type="ChEBI" id="CHEBI:30616"/>
    </ligand>
</feature>
<feature type="binding site" evidence="1">
    <location>
        <position position="83"/>
    </location>
    <ligand>
        <name>Mg(2+)</name>
        <dbReference type="ChEBI" id="CHEBI:18420"/>
    </ligand>
</feature>
<feature type="binding site" evidence="1">
    <location>
        <position position="84"/>
    </location>
    <ligand>
        <name>ATP</name>
        <dbReference type="ChEBI" id="CHEBI:30616"/>
    </ligand>
</feature>
<feature type="binding site" evidence="1">
    <location>
        <begin position="145"/>
        <end position="147"/>
    </location>
    <ligand>
        <name>ATP</name>
        <dbReference type="ChEBI" id="CHEBI:30616"/>
    </ligand>
</feature>
<feature type="binding site" evidence="1">
    <location>
        <position position="188"/>
    </location>
    <ligand>
        <name>ATP</name>
        <dbReference type="ChEBI" id="CHEBI:30616"/>
    </ligand>
</feature>
<feature type="binding site" evidence="1">
    <location>
        <position position="198"/>
    </location>
    <ligand>
        <name>ATP</name>
        <dbReference type="ChEBI" id="CHEBI:30616"/>
    </ligand>
</feature>
<feature type="binding site" evidence="1">
    <location>
        <position position="235"/>
    </location>
    <ligand>
        <name>ATP</name>
        <dbReference type="ChEBI" id="CHEBI:30616"/>
    </ligand>
</feature>
<feature type="binding site" evidence="1">
    <location>
        <position position="327"/>
    </location>
    <ligand>
        <name>DNA</name>
        <dbReference type="ChEBI" id="CHEBI:16991"/>
    </ligand>
</feature>
<feature type="binding site" evidence="1">
    <location>
        <position position="332"/>
    </location>
    <ligand>
        <name>DNA</name>
        <dbReference type="ChEBI" id="CHEBI:16991"/>
    </ligand>
</feature>
<sequence>MSETTDYGASNTGANEESLRMVSSQPIGNEPVSDEELRPHVLGGFIGQPRLKAQLQLFLDAARKRDVPPDHILLAGPPGLGKTTLAMIVANELEVPIRVTSGPAVQHAGDLASILSSLDVGEVLFIDEIHRLPRAAEELLYIAMEDFRVDVMVGKGPGASSIPLTLPRFTVIGATTREGMLPSPLRARFGFTAHLDFYPHEELEKLIERSANVLGVNLDTGSAHELALRSRGTPRIANRLLRRVRDWAIVHDLIVVRPDDVKEALALYQIDSEGLDRLDIAVLNAIVRNFNGGPVGLNNLAAMVGEESETVETVCEPYLVREGFMIRTPKGRVATEKAWQHLGITPKDDVSKLF</sequence>
<evidence type="ECO:0000255" key="1">
    <source>
        <dbReference type="HAMAP-Rule" id="MF_00016"/>
    </source>
</evidence>